<name>SUP9_CAEEL</name>
<organism>
    <name type="scientific">Caenorhabditis elegans</name>
    <dbReference type="NCBI Taxonomy" id="6239"/>
    <lineage>
        <taxon>Eukaryota</taxon>
        <taxon>Metazoa</taxon>
        <taxon>Ecdysozoa</taxon>
        <taxon>Nematoda</taxon>
        <taxon>Chromadorea</taxon>
        <taxon>Rhabditida</taxon>
        <taxon>Rhabditina</taxon>
        <taxon>Rhabditomorpha</taxon>
        <taxon>Rhabditoidea</taxon>
        <taxon>Rhabditidae</taxon>
        <taxon>Peloderinae</taxon>
        <taxon>Caenorhabditis</taxon>
    </lineage>
</organism>
<proteinExistence type="evidence at protein level"/>
<feature type="chain" id="PRO_0000101770" description="Two pore potassium channel protein sup-9">
    <location>
        <begin position="1"/>
        <end position="329"/>
    </location>
</feature>
<feature type="topological domain" description="Cytoplasmic" evidence="1">
    <location>
        <begin position="1"/>
        <end position="8"/>
    </location>
</feature>
<feature type="transmembrane region" description="Helical" evidence="1">
    <location>
        <begin position="9"/>
        <end position="29"/>
    </location>
</feature>
<feature type="intramembrane region" description="Pore-forming; Name=Pore-forming 1" evidence="1">
    <location>
        <begin position="80"/>
        <end position="100"/>
    </location>
</feature>
<feature type="transmembrane region" description="Helical" evidence="1">
    <location>
        <begin position="108"/>
        <end position="128"/>
    </location>
</feature>
<feature type="topological domain" description="Cytoplasmic" evidence="1">
    <location>
        <begin position="129"/>
        <end position="157"/>
    </location>
</feature>
<feature type="transmembrane region" description="Helical" evidence="1">
    <location>
        <begin position="158"/>
        <end position="178"/>
    </location>
</feature>
<feature type="intramembrane region" description="Pore-forming; Name=Pore-forming 2" evidence="1">
    <location>
        <begin position="186"/>
        <end position="206"/>
    </location>
</feature>
<feature type="transmembrane region" description="Helical" evidence="1">
    <location>
        <begin position="220"/>
        <end position="240"/>
    </location>
</feature>
<feature type="topological domain" description="Cytoplasmic" evidence="1">
    <location>
        <begin position="241"/>
        <end position="329"/>
    </location>
</feature>
<feature type="region of interest" description="May be important for regulation by and/or interaction with sup-10" evidence="7">
    <location>
        <begin position="289"/>
        <end position="296"/>
    </location>
</feature>
<feature type="region of interest" description="Disordered" evidence="2">
    <location>
        <begin position="307"/>
        <end position="329"/>
    </location>
</feature>
<feature type="short sequence motif" description="Selectivity filter" evidence="1">
    <location>
        <begin position="93"/>
        <end position="98"/>
    </location>
</feature>
<feature type="short sequence motif" description="Selectivity filter" evidence="1">
    <location>
        <begin position="198"/>
        <end position="203"/>
    </location>
</feature>
<feature type="glycosylation site" description="N-linked (GlcNAc...) asparagine" evidence="1">
    <location>
        <position position="53"/>
    </location>
</feature>
<feature type="glycosylation site" description="N-linked (GlcNAc...) asparagine" evidence="1">
    <location>
        <position position="182"/>
    </location>
</feature>
<feature type="mutagenesis site" description="In n2282; loss of function." evidence="4">
    <original>M</original>
    <variation>I</variation>
    <location>
        <position position="1"/>
    </location>
</feature>
<feature type="mutagenesis site" description="In n213; loss of function." evidence="4">
    <original>G</original>
    <variation>E</variation>
    <location>
        <position position="22"/>
    </location>
</feature>
<feature type="mutagenesis site" description="In lr129; loss of function." evidence="4">
    <original>A</original>
    <variation>V</variation>
    <location>
        <position position="23"/>
    </location>
</feature>
<feature type="mutagenesis site" description="In n4265 and n3975; loss of function. Not required for sup-18 mediated regulation." evidence="5">
    <original>D</original>
    <variation>N</variation>
    <location>
        <position position="27"/>
    </location>
</feature>
<feature type="mutagenesis site" description="In n1472; loss of function." evidence="4">
    <original>V</original>
    <variation>A</variation>
    <location>
        <position position="41"/>
    </location>
</feature>
<feature type="mutagenesis site" description="In n233; loss of function." evidence="4">
    <original>V</original>
    <variation>E</variation>
    <location>
        <position position="44"/>
    </location>
</feature>
<feature type="mutagenesis site" description="In n2291; loss of function." evidence="4">
    <original>D</original>
    <variation>V</variation>
    <location>
        <position position="58"/>
    </location>
</feature>
<feature type="mutagenesis site" description="In lr35; loss of function." evidence="4">
    <original>I</original>
    <variation>S</variation>
    <location>
        <position position="61"/>
    </location>
</feature>
<feature type="mutagenesis site" description="In n1025; loss of function." evidence="4">
    <original>A</original>
    <variation>V</variation>
    <location>
        <position position="74"/>
    </location>
</feature>
<feature type="mutagenesis site" description="In n1016; loss of function." evidence="4">
    <original>I</original>
    <variation>N</variation>
    <location>
        <position position="94"/>
    </location>
</feature>
<feature type="mutagenesis site" description="In n1020 and n2354; loss of function." evidence="4">
    <original>G</original>
    <variation>D</variation>
    <location>
        <position position="95"/>
    </location>
</feature>
<feature type="mutagenesis site" description="In n3976; loss of function. Not required for sup-18 mediated regulation." evidence="5">
    <original>T</original>
    <variation>I</variation>
    <location>
        <position position="100"/>
    </location>
</feature>
<feature type="mutagenesis site" description="In n190, n598, n2353 and n2356; loss of function." evidence="4">
    <original>P</original>
    <variation>S</variation>
    <location>
        <position position="101"/>
    </location>
</feature>
<feature type="mutagenesis site" description="In n2347; loss of function." evidence="4">
    <original>T</original>
    <variation>I</variation>
    <location>
        <position position="103"/>
    </location>
</feature>
<feature type="mutagenesis site" description="In n1009; loss of function." evidence="4">
    <original>G</original>
    <variation>E</variation>
    <location>
        <position position="106"/>
    </location>
</feature>
<feature type="mutagenesis site" description="In n2351; loss of function." evidence="4">
    <original>G</original>
    <variation>R</variation>
    <location>
        <position position="106"/>
    </location>
</feature>
<feature type="mutagenesis site" description="In lr45; loss of function." evidence="4">
    <original>F</original>
    <variation>S</variation>
    <location>
        <position position="109"/>
    </location>
</feature>
<feature type="mutagenesis site" description="In n2281 and n2345; loss of function." evidence="4">
    <original>P</original>
    <variation>S</variation>
    <location>
        <position position="119"/>
    </location>
</feature>
<feature type="mutagenesis site" description="In lr100; loss of function." evidence="4">
    <original>G</original>
    <variation>R</variation>
    <location>
        <position position="121"/>
    </location>
</feature>
<feature type="mutagenesis site" description="In n264 and n3977; loss of function. Not required for sup-18 mediated regulation." evidence="4 5">
    <original>L</original>
    <variation>F</variation>
    <location>
        <position position="122"/>
    </location>
</feature>
<feature type="mutagenesis site" description="In lr38; loss of function." evidence="4">
    <original>W</original>
    <variation>R</variation>
    <location>
        <position position="165"/>
    </location>
</feature>
<feature type="mutagenesis site" description="In n219; loss of function." evidence="4">
    <original>G</original>
    <variation>E</variation>
    <location>
        <position position="172"/>
    </location>
</feature>
<feature type="mutagenesis site" description="In n223 and n2355; loss of function." evidence="4">
    <original>G</original>
    <variation>R</variation>
    <location>
        <position position="172"/>
    </location>
</feature>
<feature type="mutagenesis site" description="In n2288; partial loss of function." evidence="4">
    <original>G</original>
    <variation>E</variation>
    <location>
        <position position="173"/>
    </location>
</feature>
<feature type="mutagenesis site" description="In n2294 and n2296; loss of function." evidence="4">
    <original>G</original>
    <variation>R</variation>
    <location>
        <position position="173"/>
    </location>
</feature>
<feature type="mutagenesis site" description="In n2359; partial loss of function." evidence="4">
    <original>A</original>
    <variation>T</variation>
    <location>
        <position position="174"/>
    </location>
</feature>
<feature type="mutagenesis site" description="In n2350; loss of function." evidence="4">
    <original>E</original>
    <variation>K</variation>
    <location>
        <position position="181"/>
    </location>
</feature>
<feature type="mutagenesis site" description="In n2352; loss of function." evidence="4">
    <original>Y</original>
    <variation>F</variation>
    <location>
        <position position="190"/>
    </location>
</feature>
<feature type="mutagenesis site" description="In n2278 and n2343; loss of function." evidence="4">
    <original>T</original>
    <variation>I</variation>
    <location>
        <position position="195"/>
    </location>
</feature>
<feature type="mutagenesis site" description="In n191, n2283 and n2286; loss of function." evidence="4">
    <original>G</original>
    <variation>E</variation>
    <location>
        <position position="200"/>
    </location>
</feature>
<feature type="mutagenesis site" description="In n2344; loss of function." evidence="4">
    <original>G</original>
    <variation>D</variation>
    <location>
        <position position="202"/>
    </location>
</feature>
<feature type="mutagenesis site" description="In n1469; loss of function." evidence="4">
    <original>G</original>
    <variation>S</variation>
    <location>
        <position position="202"/>
    </location>
</feature>
<feature type="mutagenesis site" description="In lr1; loss of function." evidence="4">
    <original>D</original>
    <variation>A</variation>
    <location>
        <position position="203"/>
    </location>
</feature>
<feature type="mutagenesis site" description="In n2346 and n2349; loss of function." evidence="4">
    <original>D</original>
    <variation>N</variation>
    <location>
        <position position="203"/>
    </location>
</feature>
<feature type="mutagenesis site" description="In n1557; loss of function." evidence="4">
    <original>F</original>
    <variation>S</variation>
    <location>
        <position position="226"/>
    </location>
</feature>
<feature type="mutagenesis site" description="In n2176; loss of function." evidence="4">
    <original>G</original>
    <variation>E</variation>
    <location>
        <position position="230"/>
    </location>
</feature>
<feature type="mutagenesis site" description="In n2348; loss of function." evidence="4">
    <original>G</original>
    <variation>R</variation>
    <location>
        <position position="230"/>
    </location>
</feature>
<feature type="mutagenesis site" description="In n189 and n2358; loss of function." evidence="4">
    <original>S</original>
    <variation>F</variation>
    <location>
        <position position="235"/>
    </location>
</feature>
<feature type="mutagenesis site" description="In n2360 and n2361; partial loss of function." evidence="4">
    <original>A</original>
    <variation>M</variation>
    <location>
        <position position="236"/>
    </location>
</feature>
<feature type="mutagenesis site" description="In n1550, n3310, e2655 and 2661; gain of function, uncoordinated rubber band response in heterozygous mutants, inviable in homozygous mutants." evidence="4">
    <original>A</original>
    <variation>T</variation>
    <location>
        <position position="236"/>
    </location>
</feature>
<feature type="mutagenesis site" description="In lr142; loss of function." evidence="4">
    <original>V</original>
    <variation>M</variation>
    <location>
        <position position="242"/>
    </location>
</feature>
<feature type="mutagenesis site" description="In n3935; loss of function." evidence="5">
    <original>R</original>
    <variation>W</variation>
    <location>
        <position position="244"/>
    </location>
</feature>
<feature type="mutagenesis site" description="In n4259; loss of function." evidence="5">
    <original>S</original>
    <variation>A</variation>
    <location>
        <position position="292"/>
    </location>
</feature>
<feature type="mutagenesis site" description="In n1435, n3942, n4253 and n4254; loss of function." evidence="5">
    <original>S</original>
    <variation>F</variation>
    <location>
        <position position="292"/>
    </location>
</feature>
<feature type="mutagenesis site" description="Loss of function." evidence="5">
    <original>C</original>
    <variation>A</variation>
    <location>
        <position position="293"/>
    </location>
</feature>
<feature type="mutagenesis site" description="In n4262; loss of function." evidence="5">
    <original>S</original>
    <variation>A</variation>
    <location>
        <position position="294"/>
    </location>
</feature>
<feature type="mutagenesis site" description="Loss of function." evidence="5">
    <original>C</original>
    <variation>A</variation>
    <location>
        <position position="295"/>
    </location>
</feature>
<feature type="mutagenesis site" description="Loss of function." evidence="5">
    <original>Y</original>
    <variation>A</variation>
    <location>
        <position position="296"/>
    </location>
</feature>
<feature type="mutagenesis site" description="In n4269; loss of function." evidence="5">
    <original>L</original>
    <variation>P</variation>
    <location>
        <position position="303"/>
    </location>
</feature>
<sequence length="329" mass="36992">MKRQNIRTLSLIVCTLTYLLVGAAVFDALETENEILQRKLVQRVREKLKTKYNMSNADYEILEATIVKSVPHKAGYQWKFSGAFYFATTVITTIGYGHSTPMTDAGKVFCMLYALAGIPLGLIMFQSIGERMNTFAAKLLRFIRRAAGKQPIVTSSDLIIFCTGWGGLLIFGGAFMFSSYENWTYFDAVYYCFVTLTTIGFGDYVALQKRGSLQTQPEYVFFSLVFILFGLTVISAAMNLLVLRFLTMNTEDERRDEQEAILAAQGLVRVGDPTADDDFGRLPLSDNVSLASCSCYQLPDEKLRHRHRKHTEPHGGPPTFSGMTTRPKY</sequence>
<accession>O17185</accession>
<accession>O76795</accession>
<reference evidence="8 10" key="1">
    <citation type="journal article" date="2003" name="J. Neurosci.">
        <title>sup-9, sup-10, and unc-93 may encode components of a two-pore K+ channel that coordinates muscle contraction in Caenorhabditis elegans.</title>
        <authorList>
            <person name="de la Cruz I.P."/>
            <person name="Levin J.Z."/>
            <person name="Cummins C."/>
            <person name="Anderson P."/>
            <person name="Horvitz H.R."/>
        </authorList>
    </citation>
    <scope>NUCLEOTIDE SEQUENCE [MRNA]</scope>
    <scope>FUNCTION</scope>
    <scope>SUBCELLULAR LOCATION</scope>
    <scope>TISSUE SPECIFICITY</scope>
    <scope>DEVELOPMENTAL STAGE</scope>
    <scope>MUTAGENESIS OF MET-1; GLY-22; ALA-23; VAL-41; VAL-44; ASP-58; ILE-61; ALA-74; ILE-94; GLY-95; PRO-101; THR-103; GLY-106; PHE-109; PRO-119; GLY-121; LEU-122; TRP-165; GLY-172; GLY-173; ALA-174; GLU-181; TYR-190; THR-195; GLY-200; GLY-202; ASP-203; PHE-226; GLY-230; SER-235; ALA-236 AND VAL-242</scope>
    <source>
        <strain evidence="4">Bristol N2</strain>
    </source>
</reference>
<reference evidence="8 9" key="2">
    <citation type="submission" date="1998-08" db="EMBL/GenBank/DDBJ databases">
        <title>Potassium channels in C. elegans.</title>
        <authorList>
            <person name="Wang Z.-W."/>
            <person name="Salkoff L."/>
        </authorList>
    </citation>
    <scope>NUCLEOTIDE SEQUENCE [MRNA]</scope>
</reference>
<reference key="3">
    <citation type="journal article" date="1998" name="Science">
        <title>Genome sequence of the nematode C. elegans: a platform for investigating biology.</title>
        <authorList>
            <consortium name="The C. elegans sequencing consortium"/>
        </authorList>
    </citation>
    <scope>NUCLEOTIDE SEQUENCE [LARGE SCALE GENOMIC DNA]</scope>
    <source>
        <strain>Bristol N2</strain>
    </source>
</reference>
<reference evidence="8" key="4">
    <citation type="journal article" date="2001" name="Neuroscience">
        <title>Evolution tunes the excitability of individual neurons.</title>
        <authorList>
            <person name="Salkoff L."/>
            <person name="Butler A."/>
            <person name="Fawcett G."/>
            <person name="Kunkel M."/>
            <person name="McArdle C."/>
            <person name="Paz-y-Mino G."/>
            <person name="Nonet M."/>
            <person name="Walton N."/>
            <person name="Wang Z.-W."/>
            <person name="Yuan A."/>
            <person name="Wei A."/>
        </authorList>
    </citation>
    <scope>TISSUE SPECIFICITY</scope>
</reference>
<reference key="5">
    <citation type="journal article" date="2014" name="PLoS Genet.">
        <title>The Caenorhabditis elegans iodotyrosine deiodinase ortholog SUP-18 functions through a conserved channel SC-box to regulate the muscle two-pore domain potassium channel SUP-9.</title>
        <authorList>
            <person name="de la Cruz I.P."/>
            <person name="Ma L."/>
            <person name="Horvitz H.R."/>
        </authorList>
    </citation>
    <scope>FUNCTION</scope>
    <scope>REGION</scope>
    <scope>MUTAGENESIS OF ASP-27; THR-100; LEU-122; ARG-244; SER-292; SER-294 AND LEU-303</scope>
</reference>
<gene>
    <name evidence="11" type="primary">sup-9</name>
    <name type="ORF">F34D6.3</name>
</gene>
<protein>
    <recommendedName>
        <fullName>Two pore potassium channel protein sup-9</fullName>
    </recommendedName>
    <alternativeName>
        <fullName>Suppressor of unc-93 protein 9</fullName>
    </alternativeName>
    <alternativeName>
        <fullName>n2P38</fullName>
    </alternativeName>
</protein>
<evidence type="ECO:0000255" key="1"/>
<evidence type="ECO:0000256" key="2">
    <source>
        <dbReference type="SAM" id="MobiDB-lite"/>
    </source>
</evidence>
<evidence type="ECO:0000269" key="3">
    <source>
    </source>
</evidence>
<evidence type="ECO:0000269" key="4">
    <source>
    </source>
</evidence>
<evidence type="ECO:0000269" key="5">
    <source>
    </source>
</evidence>
<evidence type="ECO:0000303" key="6">
    <source>
    </source>
</evidence>
<evidence type="ECO:0000303" key="7">
    <source>
    </source>
</evidence>
<evidence type="ECO:0000305" key="8"/>
<evidence type="ECO:0000312" key="9">
    <source>
        <dbReference type="EMBL" id="AAC32863.1"/>
    </source>
</evidence>
<evidence type="ECO:0000312" key="10">
    <source>
        <dbReference type="EMBL" id="AAQ84518.1"/>
    </source>
</evidence>
<evidence type="ECO:0000312" key="11">
    <source>
        <dbReference type="WormBase" id="F34D6.3"/>
    </source>
</evidence>
<keyword id="KW-0325">Glycoprotein</keyword>
<keyword id="KW-0407">Ion channel</keyword>
<keyword id="KW-0406">Ion transport</keyword>
<keyword id="KW-0472">Membrane</keyword>
<keyword id="KW-0630">Potassium</keyword>
<keyword id="KW-0631">Potassium channel</keyword>
<keyword id="KW-0633">Potassium transport</keyword>
<keyword id="KW-1185">Reference proteome</keyword>
<keyword id="KW-0812">Transmembrane</keyword>
<keyword id="KW-1133">Transmembrane helix</keyword>
<keyword id="KW-0813">Transport</keyword>
<dbReference type="EMBL" id="AY357729">
    <property type="protein sequence ID" value="AAQ84518.1"/>
    <property type="molecule type" value="mRNA"/>
</dbReference>
<dbReference type="EMBL" id="AF083652">
    <property type="protein sequence ID" value="AAC32863.1"/>
    <property type="molecule type" value="mRNA"/>
</dbReference>
<dbReference type="EMBL" id="FO081204">
    <property type="protein sequence ID" value="CCD69862.1"/>
    <property type="molecule type" value="Genomic_DNA"/>
</dbReference>
<dbReference type="PIR" id="T32347">
    <property type="entry name" value="T32347"/>
</dbReference>
<dbReference type="PIR" id="T43509">
    <property type="entry name" value="T43509"/>
</dbReference>
<dbReference type="RefSeq" id="NP_494333.1">
    <property type="nucleotide sequence ID" value="NM_061932.6"/>
</dbReference>
<dbReference type="SMR" id="O17185"/>
<dbReference type="FunCoup" id="O17185">
    <property type="interactions" value="151"/>
</dbReference>
<dbReference type="STRING" id="6239.F34D6.3.1"/>
<dbReference type="TCDB" id="1.A.1.9.7">
    <property type="family name" value="the voltage-gated ion channel (vic) superfamily"/>
</dbReference>
<dbReference type="GlyCosmos" id="O17185">
    <property type="glycosylation" value="2 sites, No reported glycans"/>
</dbReference>
<dbReference type="PaxDb" id="6239-F34D6.3"/>
<dbReference type="EnsemblMetazoa" id="F34D6.3.1">
    <property type="protein sequence ID" value="F34D6.3.1"/>
    <property type="gene ID" value="WBGene00006318"/>
</dbReference>
<dbReference type="GeneID" id="173613"/>
<dbReference type="KEGG" id="cel:CELE_F34D6.3"/>
<dbReference type="UCSC" id="F34D6.3">
    <property type="organism name" value="c. elegans"/>
</dbReference>
<dbReference type="AGR" id="WB:WBGene00006318"/>
<dbReference type="CTD" id="173613"/>
<dbReference type="WormBase" id="F34D6.3">
    <property type="protein sequence ID" value="CE28297"/>
    <property type="gene ID" value="WBGene00006318"/>
    <property type="gene designation" value="sup-9"/>
</dbReference>
<dbReference type="eggNOG" id="KOG4404">
    <property type="taxonomic scope" value="Eukaryota"/>
</dbReference>
<dbReference type="GeneTree" id="ENSGT00940000166380"/>
<dbReference type="HOGENOM" id="CLU_022504_4_0_1"/>
<dbReference type="InParanoid" id="O17185"/>
<dbReference type="OMA" id="TMIPQEM"/>
<dbReference type="OrthoDB" id="297496at2759"/>
<dbReference type="PhylomeDB" id="O17185"/>
<dbReference type="Reactome" id="R-CEL-1299316">
    <property type="pathway name" value="TWIK-releated acid-sensitive K+ channel (TASK)"/>
</dbReference>
<dbReference type="Reactome" id="R-CEL-5576886">
    <property type="pathway name" value="Phase 4 - resting membrane potential"/>
</dbReference>
<dbReference type="PRO" id="PR:O17185"/>
<dbReference type="Proteomes" id="UP000001940">
    <property type="component" value="Chromosome II"/>
</dbReference>
<dbReference type="Bgee" id="WBGene00006318">
    <property type="expression patterns" value="Expressed in embryo and 3 other cell types or tissues"/>
</dbReference>
<dbReference type="GO" id="GO:0036195">
    <property type="term" value="C:muscle cell projection membrane"/>
    <property type="evidence" value="ECO:0000314"/>
    <property type="project" value="WormBase"/>
</dbReference>
<dbReference type="GO" id="GO:0005886">
    <property type="term" value="C:plasma membrane"/>
    <property type="evidence" value="ECO:0000314"/>
    <property type="project" value="WormBase"/>
</dbReference>
<dbReference type="GO" id="GO:0055120">
    <property type="term" value="C:striated muscle dense body"/>
    <property type="evidence" value="ECO:0000314"/>
    <property type="project" value="WormBase"/>
</dbReference>
<dbReference type="GO" id="GO:0015271">
    <property type="term" value="F:outward rectifier potassium channel activity"/>
    <property type="evidence" value="ECO:0000318"/>
    <property type="project" value="GO_Central"/>
</dbReference>
<dbReference type="GO" id="GO:0005267">
    <property type="term" value="F:potassium channel activity"/>
    <property type="evidence" value="ECO:0000304"/>
    <property type="project" value="UniProtKB"/>
</dbReference>
<dbReference type="GO" id="GO:0022841">
    <property type="term" value="F:potassium ion leak channel activity"/>
    <property type="evidence" value="ECO:0000318"/>
    <property type="project" value="GO_Central"/>
</dbReference>
<dbReference type="GO" id="GO:0071805">
    <property type="term" value="P:potassium ion transmembrane transport"/>
    <property type="evidence" value="ECO:0000318"/>
    <property type="project" value="GO_Central"/>
</dbReference>
<dbReference type="GO" id="GO:0006813">
    <property type="term" value="P:potassium ion transport"/>
    <property type="evidence" value="ECO:0000304"/>
    <property type="project" value="UniProtKB"/>
</dbReference>
<dbReference type="GO" id="GO:0006937">
    <property type="term" value="P:regulation of muscle contraction"/>
    <property type="evidence" value="ECO:0000315"/>
    <property type="project" value="UniProtKB"/>
</dbReference>
<dbReference type="FunFam" id="1.10.287.70:FF:000090">
    <property type="entry name" value="two pore potassium channel protein sup-9"/>
    <property type="match status" value="1"/>
</dbReference>
<dbReference type="Gene3D" id="1.10.287.70">
    <property type="match status" value="1"/>
</dbReference>
<dbReference type="InterPro" id="IPR003280">
    <property type="entry name" value="2pore_dom_K_chnl"/>
</dbReference>
<dbReference type="InterPro" id="IPR003092">
    <property type="entry name" value="2pore_dom_K_chnl_TASK"/>
</dbReference>
<dbReference type="InterPro" id="IPR013099">
    <property type="entry name" value="K_chnl_dom"/>
</dbReference>
<dbReference type="PANTHER" id="PTHR11003:SF291">
    <property type="entry name" value="IP11374P"/>
    <property type="match status" value="1"/>
</dbReference>
<dbReference type="PANTHER" id="PTHR11003">
    <property type="entry name" value="POTASSIUM CHANNEL, SUBFAMILY K"/>
    <property type="match status" value="1"/>
</dbReference>
<dbReference type="Pfam" id="PF07885">
    <property type="entry name" value="Ion_trans_2"/>
    <property type="match status" value="2"/>
</dbReference>
<dbReference type="PIRSF" id="PIRSF038061">
    <property type="entry name" value="K_channel_subfamily_K_type"/>
    <property type="match status" value="1"/>
</dbReference>
<dbReference type="PRINTS" id="PR01333">
    <property type="entry name" value="2POREKCHANEL"/>
</dbReference>
<dbReference type="PRINTS" id="PR01095">
    <property type="entry name" value="TASKCHANNEL"/>
</dbReference>
<dbReference type="SUPFAM" id="SSF81324">
    <property type="entry name" value="Voltage-gated potassium channels"/>
    <property type="match status" value="2"/>
</dbReference>
<comment type="function">
    <text evidence="4 5">Potassium channel involved in coordination of muscle contraction (PubMed:14534247). Activity is regulated by sup-18 (PubMed:24586202).</text>
</comment>
<comment type="subunit">
    <text evidence="6">May form a complex with the regulatory subunits unc-93 and sup-10.</text>
</comment>
<comment type="subcellular location">
    <subcellularLocation>
        <location evidence="8">Membrane</location>
        <topology evidence="8">Multi-pass membrane protein</topology>
    </subcellularLocation>
    <text evidence="4">Associated with dense bodies.</text>
</comment>
<comment type="tissue specificity">
    <text evidence="3 4">Low levels along surface of body-wall muscle cells, in vulval and intestinal muscles and, more weakly, in anal depressor and sphincter muscles. Also expressed in a subset of head neurons.</text>
</comment>
<comment type="developmental stage">
    <text evidence="4">Expressed in body wall muscles from 3.5-fold stage of embryogenesis with highest levels in late embryos and L1 stage larvae. Lower levels persist to adulthood.</text>
</comment>
<comment type="miscellaneous">
    <text evidence="4">Uncoordinated rubber band response is phenocopied by exposure to the unc-49 agonist muscimol.</text>
</comment>
<comment type="similarity">
    <text evidence="1">Belongs to the two pore domain potassium channel (TC 1.A.1.8) family.</text>
</comment>